<name>TNNI1_RAT</name>
<evidence type="ECO:0000250" key="1">
    <source>
        <dbReference type="UniProtKB" id="P02645"/>
    </source>
</evidence>
<evidence type="ECO:0000305" key="2"/>
<evidence type="ECO:0007744" key="3">
    <source>
    </source>
</evidence>
<sequence length="187" mass="21724">MPEVERKSKITASRKLMLKSLMLAKAKECWEQEHEEREAEKVRYLSERIPTLQTRGLSLSALQDLCRELHAKVEVVDEERYDIEAKCLHNTREIKDLKLKVLDLRGKFKRPPLRRVRVSADAMLRALLGSKHKVSMDLRANLKSVKKEDTEKERPVEVGDWRKNVEAMSGMEGRKKMFDAAKSPTLQ</sequence>
<gene>
    <name type="primary">Tnni1</name>
</gene>
<organism>
    <name type="scientific">Rattus norvegicus</name>
    <name type="common">Rat</name>
    <dbReference type="NCBI Taxonomy" id="10116"/>
    <lineage>
        <taxon>Eukaryota</taxon>
        <taxon>Metazoa</taxon>
        <taxon>Chordata</taxon>
        <taxon>Craniata</taxon>
        <taxon>Vertebrata</taxon>
        <taxon>Euteleostomi</taxon>
        <taxon>Mammalia</taxon>
        <taxon>Eutheria</taxon>
        <taxon>Euarchontoglires</taxon>
        <taxon>Glires</taxon>
        <taxon>Rodentia</taxon>
        <taxon>Myomorpha</taxon>
        <taxon>Muroidea</taxon>
        <taxon>Muridae</taxon>
        <taxon>Murinae</taxon>
        <taxon>Rattus</taxon>
    </lineage>
</organism>
<reference key="1">
    <citation type="journal article" date="1989" name="J. Biol. Chem.">
        <title>cDNA clone and expression analysis of rodent fast and slow skeletal muscle troponin I mRNAs.</title>
        <authorList>
            <person name="Koppe R.I."/>
            <person name="Hallauer P.L."/>
            <person name="Karpati G."/>
            <person name="Hastings K.E.M."/>
        </authorList>
    </citation>
    <scope>NUCLEOTIDE SEQUENCE [MRNA]</scope>
</reference>
<reference key="2">
    <citation type="submission" date="2007-07" db="UniProtKB">
        <authorList>
            <person name="Lubec G."/>
            <person name="Kang S.U."/>
        </authorList>
    </citation>
    <scope>PROTEIN SEQUENCE OF 147-152</scope>
    <scope>IDENTIFICATION BY MASS SPECTROMETRY</scope>
    <source>
        <strain>Sprague-Dawley</strain>
        <tissue>Brain</tissue>
    </source>
</reference>
<reference key="3">
    <citation type="journal article" date="2012" name="Nat. Commun.">
        <title>Quantitative maps of protein phosphorylation sites across 14 different rat organs and tissues.</title>
        <authorList>
            <person name="Lundby A."/>
            <person name="Secher A."/>
            <person name="Lage K."/>
            <person name="Nordsborg N.B."/>
            <person name="Dmytriyev A."/>
            <person name="Lundby C."/>
            <person name="Olsen J.V."/>
        </authorList>
    </citation>
    <scope>PHOSPHORYLATION [LARGE SCALE ANALYSIS] AT SER-58</scope>
    <scope>IDENTIFICATION BY MASS SPECTROMETRY [LARGE SCALE ANALYSIS]</scope>
</reference>
<feature type="initiator methionine" description="Removed" evidence="1">
    <location>
        <position position="1"/>
    </location>
</feature>
<feature type="chain" id="PRO_0000186142" description="Troponin I, slow skeletal muscle">
    <location>
        <begin position="2"/>
        <end position="187"/>
    </location>
</feature>
<feature type="region of interest" description="Involved in binding TNC">
    <location>
        <begin position="2"/>
        <end position="48"/>
    </location>
</feature>
<feature type="region of interest" description="Involved in binding TNC and actin">
    <location>
        <begin position="97"/>
        <end position="118"/>
    </location>
</feature>
<feature type="modified residue" description="N-acetylproline" evidence="1">
    <location>
        <position position="2"/>
    </location>
</feature>
<feature type="modified residue" description="Phosphoserine" evidence="3">
    <location>
        <position position="58"/>
    </location>
</feature>
<keyword id="KW-0007">Acetylation</keyword>
<keyword id="KW-0009">Actin-binding</keyword>
<keyword id="KW-0903">Direct protein sequencing</keyword>
<keyword id="KW-0514">Muscle protein</keyword>
<keyword id="KW-0597">Phosphoprotein</keyword>
<keyword id="KW-1185">Reference proteome</keyword>
<comment type="function">
    <text>Troponin I is the inhibitory subunit of troponin, the thin filament regulatory complex which confers calcium-sensitivity to striated muscle actomyosin ATPase activity.</text>
</comment>
<comment type="subunit">
    <text>Binds to actin and tropomyosin.</text>
</comment>
<comment type="similarity">
    <text evidence="2">Belongs to the troponin I family.</text>
</comment>
<dbReference type="EMBL" id="J04993">
    <property type="protein sequence ID" value="AAA42295.1"/>
    <property type="molecule type" value="mRNA"/>
</dbReference>
<dbReference type="PIR" id="B44786">
    <property type="entry name" value="B44786"/>
</dbReference>
<dbReference type="RefSeq" id="NP_058880.1">
    <property type="nucleotide sequence ID" value="NM_017184.1"/>
</dbReference>
<dbReference type="SMR" id="P13413"/>
<dbReference type="BioGRID" id="248040">
    <property type="interactions" value="2"/>
</dbReference>
<dbReference type="FunCoup" id="P13413">
    <property type="interactions" value="55"/>
</dbReference>
<dbReference type="STRING" id="10116.ENSRNOP00000067933"/>
<dbReference type="iPTMnet" id="P13413"/>
<dbReference type="PhosphoSitePlus" id="P13413"/>
<dbReference type="PaxDb" id="10116-ENSRNOP00000067933"/>
<dbReference type="GeneID" id="29388"/>
<dbReference type="KEGG" id="rno:29388"/>
<dbReference type="UCSC" id="RGD:621765">
    <property type="organism name" value="rat"/>
</dbReference>
<dbReference type="AGR" id="RGD:621765"/>
<dbReference type="CTD" id="7135"/>
<dbReference type="RGD" id="621765">
    <property type="gene designation" value="Tnni1"/>
</dbReference>
<dbReference type="eggNOG" id="KOG3977">
    <property type="taxonomic scope" value="Eukaryota"/>
</dbReference>
<dbReference type="InParanoid" id="P13413"/>
<dbReference type="OrthoDB" id="371899at2759"/>
<dbReference type="PhylomeDB" id="P13413"/>
<dbReference type="Reactome" id="R-RNO-390522">
    <property type="pathway name" value="Striated Muscle Contraction"/>
</dbReference>
<dbReference type="PRO" id="PR:P13413"/>
<dbReference type="Proteomes" id="UP000002494">
    <property type="component" value="Unplaced"/>
</dbReference>
<dbReference type="GO" id="GO:0005861">
    <property type="term" value="C:troponin complex"/>
    <property type="evidence" value="ECO:0000314"/>
    <property type="project" value="RGD"/>
</dbReference>
<dbReference type="GO" id="GO:0003779">
    <property type="term" value="F:actin binding"/>
    <property type="evidence" value="ECO:0007669"/>
    <property type="project" value="UniProtKB-KW"/>
</dbReference>
<dbReference type="GO" id="GO:0060048">
    <property type="term" value="P:cardiac muscle contraction"/>
    <property type="evidence" value="ECO:0000318"/>
    <property type="project" value="GO_Central"/>
</dbReference>
<dbReference type="GO" id="GO:0003009">
    <property type="term" value="P:skeletal muscle contraction"/>
    <property type="evidence" value="ECO:0000318"/>
    <property type="project" value="GO_Central"/>
</dbReference>
<dbReference type="GO" id="GO:0014883">
    <property type="term" value="P:transition between fast and slow fiber"/>
    <property type="evidence" value="ECO:0000266"/>
    <property type="project" value="RGD"/>
</dbReference>
<dbReference type="GO" id="GO:0055010">
    <property type="term" value="P:ventricular cardiac muscle tissue morphogenesis"/>
    <property type="evidence" value="ECO:0000266"/>
    <property type="project" value="RGD"/>
</dbReference>
<dbReference type="FunFam" id="1.20.5.350:FF:000002">
    <property type="entry name" value="troponin I, fast skeletal muscle"/>
    <property type="match status" value="1"/>
</dbReference>
<dbReference type="Gene3D" id="1.20.5.350">
    <property type="match status" value="1"/>
</dbReference>
<dbReference type="Gene3D" id="6.10.250.180">
    <property type="match status" value="1"/>
</dbReference>
<dbReference type="InterPro" id="IPR001978">
    <property type="entry name" value="Troponin"/>
</dbReference>
<dbReference type="InterPro" id="IPR050875">
    <property type="entry name" value="Troponin_I"/>
</dbReference>
<dbReference type="InterPro" id="IPR038077">
    <property type="entry name" value="Troponin_sf"/>
</dbReference>
<dbReference type="PANTHER" id="PTHR13738">
    <property type="entry name" value="TROPONIN I"/>
    <property type="match status" value="1"/>
</dbReference>
<dbReference type="PANTHER" id="PTHR13738:SF9">
    <property type="entry name" value="TROPONIN I, SLOW SKELETAL MUSCLE"/>
    <property type="match status" value="1"/>
</dbReference>
<dbReference type="Pfam" id="PF00992">
    <property type="entry name" value="Troponin"/>
    <property type="match status" value="1"/>
</dbReference>
<dbReference type="SUPFAM" id="SSF90250">
    <property type="entry name" value="Troponin coil-coiled subunits"/>
    <property type="match status" value="1"/>
</dbReference>
<proteinExistence type="evidence at protein level"/>
<accession>P13413</accession>
<protein>
    <recommendedName>
        <fullName>Troponin I, slow skeletal muscle</fullName>
    </recommendedName>
    <alternativeName>
        <fullName>Troponin I, slow-twitch isoform</fullName>
    </alternativeName>
</protein>